<evidence type="ECO:0000255" key="1">
    <source>
        <dbReference type="HAMAP-Rule" id="MF_01286"/>
    </source>
</evidence>
<name>DGGGP_THEGJ</name>
<reference key="1">
    <citation type="journal article" date="2007" name="Genome Biol.">
        <title>Genome analysis and genome-wide proteomics of Thermococcus gammatolerans, the most radioresistant organism known amongst the Archaea.</title>
        <authorList>
            <person name="Zivanovic Y."/>
            <person name="Armengaud J."/>
            <person name="Lagorce A."/>
            <person name="Leplat C."/>
            <person name="Guerin P."/>
            <person name="Dutertre M."/>
            <person name="Anthouard V."/>
            <person name="Forterre P."/>
            <person name="Wincker P."/>
            <person name="Confalonieri F."/>
        </authorList>
    </citation>
    <scope>NUCLEOTIDE SEQUENCE [LARGE SCALE GENOMIC DNA]</scope>
    <source>
        <strain>DSM 15229 / JCM 11827 / EJ3</strain>
    </source>
</reference>
<accession>C5A1J7</accession>
<feature type="chain" id="PRO_1000214210" description="Digeranylgeranylglyceryl phosphate synthase">
    <location>
        <begin position="1"/>
        <end position="276"/>
    </location>
</feature>
<feature type="transmembrane region" description="Helical" evidence="1">
    <location>
        <begin position="12"/>
        <end position="34"/>
    </location>
</feature>
<feature type="transmembrane region" description="Helical" evidence="1">
    <location>
        <begin position="38"/>
        <end position="60"/>
    </location>
</feature>
<feature type="transmembrane region" description="Helical" evidence="1">
    <location>
        <begin position="84"/>
        <end position="104"/>
    </location>
</feature>
<feature type="transmembrane region" description="Helical" evidence="1">
    <location>
        <begin position="107"/>
        <end position="127"/>
    </location>
</feature>
<feature type="transmembrane region" description="Helical" evidence="1">
    <location>
        <begin position="146"/>
        <end position="166"/>
    </location>
</feature>
<feature type="transmembrane region" description="Helical" evidence="1">
    <location>
        <begin position="202"/>
        <end position="222"/>
    </location>
</feature>
<feature type="transmembrane region" description="Helical" evidence="1">
    <location>
        <begin position="224"/>
        <end position="244"/>
    </location>
</feature>
<feature type="transmembrane region" description="Helical" evidence="1">
    <location>
        <begin position="256"/>
        <end position="276"/>
    </location>
</feature>
<sequence>MELRAFVEITRPHNCALAGLVGVLGSMVALGSVPEGKILILVFLVVSLGCAGGNTINDYFDYEIDRINRPERPLPRGAMDRRTALWYSLFLFAVGLALALLISLKAFAFALLAYITMFLYAWKLKPLPFIGNIAVAALTGVTPLYGAIAVGKIGLAGTLAVCAFLVNVAREIVKDIEDVEGDLKKGAKTLPIILGRRKAAYVAAFFGVATVIASFLPVKAGVGVGYYAMVPVDLIILYAVYLILRNQDEKTAHRSQLLLKASIFLAVFAFLIAALM</sequence>
<proteinExistence type="inferred from homology"/>
<comment type="function">
    <text evidence="1">Prenyltransferase that catalyzes the transfer of the geranylgeranyl moiety of geranylgeranyl diphosphate (GGPP) to the C2 hydroxyl of (S)-3-O-geranylgeranylglyceryl phosphate (GGGP). This reaction is the second ether-bond-formation step in the biosynthesis of archaeal membrane lipids.</text>
</comment>
<comment type="catalytic activity">
    <reaction evidence="1">
        <text>sn-3-O-(geranylgeranyl)glycerol 1-phosphate + (2E,6E,10E)-geranylgeranyl diphosphate = 2,3-bis-O-(geranylgeranyl)-sn-glycerol 1-phosphate + diphosphate</text>
        <dbReference type="Rhea" id="RHEA:18109"/>
        <dbReference type="ChEBI" id="CHEBI:33019"/>
        <dbReference type="ChEBI" id="CHEBI:57677"/>
        <dbReference type="ChEBI" id="CHEBI:58756"/>
        <dbReference type="ChEBI" id="CHEBI:58837"/>
        <dbReference type="EC" id="2.5.1.42"/>
    </reaction>
</comment>
<comment type="cofactor">
    <cofactor evidence="1">
        <name>Mg(2+)</name>
        <dbReference type="ChEBI" id="CHEBI:18420"/>
    </cofactor>
</comment>
<comment type="pathway">
    <text evidence="1">Membrane lipid metabolism; glycerophospholipid metabolism.</text>
</comment>
<comment type="subcellular location">
    <subcellularLocation>
        <location evidence="1">Cell membrane</location>
        <topology evidence="1">Multi-pass membrane protein</topology>
    </subcellularLocation>
</comment>
<comment type="similarity">
    <text evidence="1">Belongs to the UbiA prenyltransferase family. DGGGP synthase subfamily.</text>
</comment>
<dbReference type="EC" id="2.5.1.42" evidence="1"/>
<dbReference type="EMBL" id="CP001398">
    <property type="protein sequence ID" value="ACS34266.1"/>
    <property type="molecule type" value="Genomic_DNA"/>
</dbReference>
<dbReference type="RefSeq" id="WP_015859375.1">
    <property type="nucleotide sequence ID" value="NC_012804.1"/>
</dbReference>
<dbReference type="SMR" id="C5A1J7"/>
<dbReference type="STRING" id="593117.TGAM_1764"/>
<dbReference type="PaxDb" id="593117-TGAM_1764"/>
<dbReference type="GeneID" id="7987483"/>
<dbReference type="KEGG" id="tga:TGAM_1764"/>
<dbReference type="PATRIC" id="fig|593117.10.peg.1772"/>
<dbReference type="eggNOG" id="arCOG00476">
    <property type="taxonomic scope" value="Archaea"/>
</dbReference>
<dbReference type="HOGENOM" id="CLU_073311_1_1_2"/>
<dbReference type="OrthoDB" id="11851at2157"/>
<dbReference type="UniPathway" id="UPA00940"/>
<dbReference type="Proteomes" id="UP000001488">
    <property type="component" value="Chromosome"/>
</dbReference>
<dbReference type="GO" id="GO:0005886">
    <property type="term" value="C:plasma membrane"/>
    <property type="evidence" value="ECO:0007669"/>
    <property type="project" value="UniProtKB-SubCell"/>
</dbReference>
<dbReference type="GO" id="GO:0047295">
    <property type="term" value="F:geranylgeranylglycerol-phosphate geranylgeranyltransferase activity"/>
    <property type="evidence" value="ECO:0007669"/>
    <property type="project" value="UniProtKB-UniRule"/>
</dbReference>
<dbReference type="GO" id="GO:0000287">
    <property type="term" value="F:magnesium ion binding"/>
    <property type="evidence" value="ECO:0007669"/>
    <property type="project" value="UniProtKB-UniRule"/>
</dbReference>
<dbReference type="GO" id="GO:0046474">
    <property type="term" value="P:glycerophospholipid biosynthetic process"/>
    <property type="evidence" value="ECO:0007669"/>
    <property type="project" value="UniProtKB-UniRule"/>
</dbReference>
<dbReference type="CDD" id="cd13961">
    <property type="entry name" value="PT_UbiA_DGGGPS"/>
    <property type="match status" value="1"/>
</dbReference>
<dbReference type="Gene3D" id="1.10.357.140">
    <property type="entry name" value="UbiA prenyltransferase"/>
    <property type="match status" value="1"/>
</dbReference>
<dbReference type="Gene3D" id="1.20.120.1780">
    <property type="entry name" value="UbiA prenyltransferase"/>
    <property type="match status" value="1"/>
</dbReference>
<dbReference type="HAMAP" id="MF_01286">
    <property type="entry name" value="DGGGP_synth"/>
    <property type="match status" value="1"/>
</dbReference>
<dbReference type="InterPro" id="IPR023547">
    <property type="entry name" value="DGGGP_synth"/>
</dbReference>
<dbReference type="InterPro" id="IPR050475">
    <property type="entry name" value="Prenyltransferase_related"/>
</dbReference>
<dbReference type="InterPro" id="IPR000537">
    <property type="entry name" value="UbiA_prenyltransferase"/>
</dbReference>
<dbReference type="InterPro" id="IPR044878">
    <property type="entry name" value="UbiA_sf"/>
</dbReference>
<dbReference type="NCBIfam" id="NF009522">
    <property type="entry name" value="PRK12883.1"/>
    <property type="match status" value="1"/>
</dbReference>
<dbReference type="PANTHER" id="PTHR42723">
    <property type="entry name" value="CHLOROPHYLL SYNTHASE"/>
    <property type="match status" value="1"/>
</dbReference>
<dbReference type="PANTHER" id="PTHR42723:SF1">
    <property type="entry name" value="CHLOROPHYLL SYNTHASE, CHLOROPLASTIC"/>
    <property type="match status" value="1"/>
</dbReference>
<dbReference type="Pfam" id="PF01040">
    <property type="entry name" value="UbiA"/>
    <property type="match status" value="1"/>
</dbReference>
<gene>
    <name type="ordered locus">TGAM_1764</name>
</gene>
<protein>
    <recommendedName>
        <fullName evidence="1">Digeranylgeranylglyceryl phosphate synthase</fullName>
        <shortName evidence="1">DGGGP synthase</shortName>
        <shortName evidence="1">DGGGPS</shortName>
        <ecNumber evidence="1">2.5.1.42</ecNumber>
    </recommendedName>
    <alternativeName>
        <fullName evidence="1">(S)-2,3-di-O-geranylgeranylglyceryl phosphate synthase</fullName>
    </alternativeName>
    <alternativeName>
        <fullName evidence="1">Geranylgeranylglycerol-phosphate geranylgeranyltransferase</fullName>
    </alternativeName>
</protein>
<organism>
    <name type="scientific">Thermococcus gammatolerans (strain DSM 15229 / JCM 11827 / EJ3)</name>
    <dbReference type="NCBI Taxonomy" id="593117"/>
    <lineage>
        <taxon>Archaea</taxon>
        <taxon>Methanobacteriati</taxon>
        <taxon>Methanobacteriota</taxon>
        <taxon>Thermococci</taxon>
        <taxon>Thermococcales</taxon>
        <taxon>Thermococcaceae</taxon>
        <taxon>Thermococcus</taxon>
    </lineage>
</organism>
<keyword id="KW-1003">Cell membrane</keyword>
<keyword id="KW-0444">Lipid biosynthesis</keyword>
<keyword id="KW-0443">Lipid metabolism</keyword>
<keyword id="KW-0460">Magnesium</keyword>
<keyword id="KW-0472">Membrane</keyword>
<keyword id="KW-0594">Phospholipid biosynthesis</keyword>
<keyword id="KW-1208">Phospholipid metabolism</keyword>
<keyword id="KW-1185">Reference proteome</keyword>
<keyword id="KW-0808">Transferase</keyword>
<keyword id="KW-0812">Transmembrane</keyword>
<keyword id="KW-1133">Transmembrane helix</keyword>